<organism>
    <name type="scientific">Arabidopsis thaliana</name>
    <name type="common">Mouse-ear cress</name>
    <dbReference type="NCBI Taxonomy" id="3702"/>
    <lineage>
        <taxon>Eukaryota</taxon>
        <taxon>Viridiplantae</taxon>
        <taxon>Streptophyta</taxon>
        <taxon>Embryophyta</taxon>
        <taxon>Tracheophyta</taxon>
        <taxon>Spermatophyta</taxon>
        <taxon>Magnoliopsida</taxon>
        <taxon>eudicotyledons</taxon>
        <taxon>Gunneridae</taxon>
        <taxon>Pentapetalae</taxon>
        <taxon>rosids</taxon>
        <taxon>malvids</taxon>
        <taxon>Brassicales</taxon>
        <taxon>Brassicaceae</taxon>
        <taxon>Camelineae</taxon>
        <taxon>Arabidopsis</taxon>
    </lineage>
</organism>
<keyword id="KW-0040">ANK repeat</keyword>
<keyword id="KW-0238">DNA-binding</keyword>
<keyword id="KW-0479">Metal-binding</keyword>
<keyword id="KW-0597">Phosphoprotein</keyword>
<keyword id="KW-1185">Reference proteome</keyword>
<keyword id="KW-0677">Repeat</keyword>
<keyword id="KW-0862">Zinc</keyword>
<keyword id="KW-0863">Zinc-finger</keyword>
<name>C3H30_ARATH</name>
<feature type="chain" id="PRO_0000371988" description="Zinc finger CCCH domain-containing protein 30">
    <location>
        <begin position="1"/>
        <end position="716"/>
    </location>
</feature>
<feature type="repeat" description="ANK 1">
    <location>
        <begin position="90"/>
        <end position="120"/>
    </location>
</feature>
<feature type="repeat" description="ANK 2">
    <location>
        <begin position="125"/>
        <end position="157"/>
    </location>
</feature>
<feature type="zinc finger region" description="C3H1-type 1" evidence="1">
    <location>
        <begin position="306"/>
        <end position="328"/>
    </location>
</feature>
<feature type="zinc finger region" description="C3H1-type 2" evidence="1">
    <location>
        <begin position="336"/>
        <end position="360"/>
    </location>
</feature>
<feature type="region of interest" description="Disordered" evidence="2">
    <location>
        <begin position="201"/>
        <end position="231"/>
    </location>
</feature>
<feature type="region of interest" description="Disordered" evidence="2">
    <location>
        <begin position="521"/>
        <end position="562"/>
    </location>
</feature>
<feature type="region of interest" description="Disordered" evidence="2">
    <location>
        <begin position="583"/>
        <end position="638"/>
    </location>
</feature>
<feature type="region of interest" description="Disordered" evidence="2">
    <location>
        <begin position="667"/>
        <end position="692"/>
    </location>
</feature>
<feature type="compositionally biased region" description="Polar residues" evidence="2">
    <location>
        <begin position="203"/>
        <end position="213"/>
    </location>
</feature>
<feature type="compositionally biased region" description="Polar residues" evidence="2">
    <location>
        <begin position="530"/>
        <end position="543"/>
    </location>
</feature>
<feature type="compositionally biased region" description="Low complexity" evidence="2">
    <location>
        <begin position="583"/>
        <end position="594"/>
    </location>
</feature>
<feature type="compositionally biased region" description="Polar residues" evidence="2">
    <location>
        <begin position="605"/>
        <end position="630"/>
    </location>
</feature>
<feature type="modified residue" description="Phosphoserine" evidence="3">
    <location>
        <position position="566"/>
    </location>
</feature>
<reference key="1">
    <citation type="journal article" date="1999" name="Nature">
        <title>Sequence and analysis of chromosome 2 of the plant Arabidopsis thaliana.</title>
        <authorList>
            <person name="Lin X."/>
            <person name="Kaul S."/>
            <person name="Rounsley S.D."/>
            <person name="Shea T.P."/>
            <person name="Benito M.-I."/>
            <person name="Town C.D."/>
            <person name="Fujii C.Y."/>
            <person name="Mason T.M."/>
            <person name="Bowman C.L."/>
            <person name="Barnstead M.E."/>
            <person name="Feldblyum T.V."/>
            <person name="Buell C.R."/>
            <person name="Ketchum K.A."/>
            <person name="Lee J.J."/>
            <person name="Ronning C.M."/>
            <person name="Koo H.L."/>
            <person name="Moffat K.S."/>
            <person name="Cronin L.A."/>
            <person name="Shen M."/>
            <person name="Pai G."/>
            <person name="Van Aken S."/>
            <person name="Umayam L."/>
            <person name="Tallon L.J."/>
            <person name="Gill J.E."/>
            <person name="Adams M.D."/>
            <person name="Carrera A.J."/>
            <person name="Creasy T.H."/>
            <person name="Goodman H.M."/>
            <person name="Somerville C.R."/>
            <person name="Copenhaver G.P."/>
            <person name="Preuss D."/>
            <person name="Nierman W.C."/>
            <person name="White O."/>
            <person name="Eisen J.A."/>
            <person name="Salzberg S.L."/>
            <person name="Fraser C.M."/>
            <person name="Venter J.C."/>
        </authorList>
    </citation>
    <scope>NUCLEOTIDE SEQUENCE [LARGE SCALE GENOMIC DNA]</scope>
    <source>
        <strain>cv. Columbia</strain>
    </source>
</reference>
<reference key="2">
    <citation type="journal article" date="2017" name="Plant J.">
        <title>Araport11: a complete reannotation of the Arabidopsis thaliana reference genome.</title>
        <authorList>
            <person name="Cheng C.Y."/>
            <person name="Krishnakumar V."/>
            <person name="Chan A.P."/>
            <person name="Thibaud-Nissen F."/>
            <person name="Schobel S."/>
            <person name="Town C.D."/>
        </authorList>
    </citation>
    <scope>GENOME REANNOTATION</scope>
    <source>
        <strain>cv. Columbia</strain>
    </source>
</reference>
<reference key="3">
    <citation type="journal article" date="2003" name="Science">
        <title>Empirical analysis of transcriptional activity in the Arabidopsis genome.</title>
        <authorList>
            <person name="Yamada K."/>
            <person name="Lim J."/>
            <person name="Dale J.M."/>
            <person name="Chen H."/>
            <person name="Shinn P."/>
            <person name="Palm C.J."/>
            <person name="Southwick A.M."/>
            <person name="Wu H.C."/>
            <person name="Kim C.J."/>
            <person name="Nguyen M."/>
            <person name="Pham P.K."/>
            <person name="Cheuk R.F."/>
            <person name="Karlin-Newmann G."/>
            <person name="Liu S.X."/>
            <person name="Lam B."/>
            <person name="Sakano H."/>
            <person name="Wu T."/>
            <person name="Yu G."/>
            <person name="Miranda M."/>
            <person name="Quach H.L."/>
            <person name="Tripp M."/>
            <person name="Chang C.H."/>
            <person name="Lee J.M."/>
            <person name="Toriumi M.J."/>
            <person name="Chan M.M."/>
            <person name="Tang C.C."/>
            <person name="Onodera C.S."/>
            <person name="Deng J.M."/>
            <person name="Akiyama K."/>
            <person name="Ansari Y."/>
            <person name="Arakawa T."/>
            <person name="Banh J."/>
            <person name="Banno F."/>
            <person name="Bowser L."/>
            <person name="Brooks S.Y."/>
            <person name="Carninci P."/>
            <person name="Chao Q."/>
            <person name="Choy N."/>
            <person name="Enju A."/>
            <person name="Goldsmith A.D."/>
            <person name="Gurjal M."/>
            <person name="Hansen N.F."/>
            <person name="Hayashizaki Y."/>
            <person name="Johnson-Hopson C."/>
            <person name="Hsuan V.W."/>
            <person name="Iida K."/>
            <person name="Karnes M."/>
            <person name="Khan S."/>
            <person name="Koesema E."/>
            <person name="Ishida J."/>
            <person name="Jiang P.X."/>
            <person name="Jones T."/>
            <person name="Kawai J."/>
            <person name="Kamiya A."/>
            <person name="Meyers C."/>
            <person name="Nakajima M."/>
            <person name="Narusaka M."/>
            <person name="Seki M."/>
            <person name="Sakurai T."/>
            <person name="Satou M."/>
            <person name="Tamse R."/>
            <person name="Vaysberg M."/>
            <person name="Wallender E.K."/>
            <person name="Wong C."/>
            <person name="Yamamura Y."/>
            <person name="Yuan S."/>
            <person name="Shinozaki K."/>
            <person name="Davis R.W."/>
            <person name="Theologis A."/>
            <person name="Ecker J.R."/>
        </authorList>
    </citation>
    <scope>NUCLEOTIDE SEQUENCE [LARGE SCALE MRNA]</scope>
    <source>
        <strain>cv. Columbia</strain>
    </source>
</reference>
<reference key="4">
    <citation type="journal article" date="2008" name="BMC Genomics">
        <title>Genome-wide analysis of CCCH zinc finger family in Arabidopsis and rice.</title>
        <authorList>
            <person name="Wang D."/>
            <person name="Guo Y."/>
            <person name="Wu C."/>
            <person name="Yang G."/>
            <person name="Li Y."/>
            <person name="Zheng C."/>
        </authorList>
    </citation>
    <scope>NOMENCLATURE</scope>
</reference>
<reference key="5">
    <citation type="journal article" date="2009" name="Plant Physiol.">
        <title>Large-scale Arabidopsis phosphoproteome profiling reveals novel chloroplast kinase substrates and phosphorylation networks.</title>
        <authorList>
            <person name="Reiland S."/>
            <person name="Messerli G."/>
            <person name="Baerenfaller K."/>
            <person name="Gerrits B."/>
            <person name="Endler A."/>
            <person name="Grossmann J."/>
            <person name="Gruissem W."/>
            <person name="Baginsky S."/>
        </authorList>
    </citation>
    <scope>PHOSPHORYLATION [LARGE SCALE ANALYSIS] AT SER-566</scope>
    <scope>IDENTIFICATION BY MASS SPECTROMETRY [LARGE SCALE ANALYSIS]</scope>
</reference>
<dbReference type="EMBL" id="U90439">
    <property type="protein sequence ID" value="AAB63552.2"/>
    <property type="molecule type" value="Genomic_DNA"/>
</dbReference>
<dbReference type="EMBL" id="CP002685">
    <property type="protein sequence ID" value="AEC10046.1"/>
    <property type="molecule type" value="Genomic_DNA"/>
</dbReference>
<dbReference type="EMBL" id="AY037232">
    <property type="protein sequence ID" value="AAK59832.1"/>
    <property type="molecule type" value="mRNA"/>
</dbReference>
<dbReference type="EMBL" id="AY093957">
    <property type="protein sequence ID" value="AAM16218.1"/>
    <property type="molecule type" value="mRNA"/>
</dbReference>
<dbReference type="PIR" id="E84847">
    <property type="entry name" value="E84847"/>
</dbReference>
<dbReference type="RefSeq" id="NP_565962.1">
    <property type="nucleotide sequence ID" value="NM_129754.4"/>
</dbReference>
<dbReference type="SMR" id="P93755"/>
<dbReference type="BioGRID" id="4127">
    <property type="interactions" value="4"/>
</dbReference>
<dbReference type="FunCoup" id="P93755">
    <property type="interactions" value="1350"/>
</dbReference>
<dbReference type="IntAct" id="P93755">
    <property type="interactions" value="2"/>
</dbReference>
<dbReference type="STRING" id="3702.P93755"/>
<dbReference type="GlyGen" id="P93755">
    <property type="glycosylation" value="2 sites, 1 O-linked glycan (2 sites)"/>
</dbReference>
<dbReference type="iPTMnet" id="P93755"/>
<dbReference type="MetOSite" id="P93755"/>
<dbReference type="PaxDb" id="3702-AT2G41900.1"/>
<dbReference type="ProteomicsDB" id="240518"/>
<dbReference type="EnsemblPlants" id="AT2G41900.1">
    <property type="protein sequence ID" value="AT2G41900.1"/>
    <property type="gene ID" value="AT2G41900"/>
</dbReference>
<dbReference type="GeneID" id="818790"/>
<dbReference type="Gramene" id="AT2G41900.1">
    <property type="protein sequence ID" value="AT2G41900.1"/>
    <property type="gene ID" value="AT2G41900"/>
</dbReference>
<dbReference type="KEGG" id="ath:AT2G41900"/>
<dbReference type="Araport" id="AT2G41900"/>
<dbReference type="TAIR" id="AT2G41900">
    <property type="gene designation" value="OXS2"/>
</dbReference>
<dbReference type="eggNOG" id="KOG1595">
    <property type="taxonomic scope" value="Eukaryota"/>
</dbReference>
<dbReference type="HOGENOM" id="CLU_015068_1_0_1"/>
<dbReference type="InParanoid" id="P93755"/>
<dbReference type="OMA" id="SHSNMAW"/>
<dbReference type="PhylomeDB" id="P93755"/>
<dbReference type="PRO" id="PR:P93755"/>
<dbReference type="Proteomes" id="UP000006548">
    <property type="component" value="Chromosome 2"/>
</dbReference>
<dbReference type="ExpressionAtlas" id="P93755">
    <property type="expression patterns" value="baseline and differential"/>
</dbReference>
<dbReference type="GO" id="GO:0005737">
    <property type="term" value="C:cytoplasm"/>
    <property type="evidence" value="ECO:0000314"/>
    <property type="project" value="TAIR"/>
</dbReference>
<dbReference type="GO" id="GO:0005634">
    <property type="term" value="C:nucleus"/>
    <property type="evidence" value="ECO:0000314"/>
    <property type="project" value="TAIR"/>
</dbReference>
<dbReference type="GO" id="GO:0003677">
    <property type="term" value="F:DNA binding"/>
    <property type="evidence" value="ECO:0007669"/>
    <property type="project" value="UniProtKB-KW"/>
</dbReference>
<dbReference type="GO" id="GO:0003700">
    <property type="term" value="F:DNA-binding transcription factor activity"/>
    <property type="evidence" value="ECO:0000250"/>
    <property type="project" value="TAIR"/>
</dbReference>
<dbReference type="GO" id="GO:0008270">
    <property type="term" value="F:zinc ion binding"/>
    <property type="evidence" value="ECO:0007669"/>
    <property type="project" value="UniProtKB-KW"/>
</dbReference>
<dbReference type="GO" id="GO:0006355">
    <property type="term" value="P:regulation of DNA-templated transcription"/>
    <property type="evidence" value="ECO:0000304"/>
    <property type="project" value="TAIR"/>
</dbReference>
<dbReference type="GO" id="GO:1902074">
    <property type="term" value="P:response to salt"/>
    <property type="evidence" value="ECO:0000270"/>
    <property type="project" value="TAIR"/>
</dbReference>
<dbReference type="FunFam" id="1.25.40.20:FF:000666">
    <property type="entry name" value="Zinc finger CCCH domain-containing protein 56"/>
    <property type="match status" value="1"/>
</dbReference>
<dbReference type="FunFam" id="3.30.1370.210:FF:000009">
    <property type="entry name" value="Zinc finger CCCH domain-containing protein 66"/>
    <property type="match status" value="1"/>
</dbReference>
<dbReference type="Gene3D" id="3.30.1370.210">
    <property type="match status" value="1"/>
</dbReference>
<dbReference type="Gene3D" id="1.25.40.20">
    <property type="entry name" value="Ankyrin repeat-containing domain"/>
    <property type="match status" value="1"/>
</dbReference>
<dbReference type="InterPro" id="IPR002110">
    <property type="entry name" value="Ankyrin_rpt"/>
</dbReference>
<dbReference type="InterPro" id="IPR036770">
    <property type="entry name" value="Ankyrin_rpt-contain_sf"/>
</dbReference>
<dbReference type="InterPro" id="IPR045234">
    <property type="entry name" value="Unkempt-like"/>
</dbReference>
<dbReference type="InterPro" id="IPR000571">
    <property type="entry name" value="Znf_CCCH"/>
</dbReference>
<dbReference type="PANTHER" id="PTHR14493:SF50">
    <property type="entry name" value="RING FINGER PROTEIN UNKEMPT"/>
    <property type="match status" value="1"/>
</dbReference>
<dbReference type="PANTHER" id="PTHR14493">
    <property type="entry name" value="UNKEMPT FAMILY MEMBER"/>
    <property type="match status" value="1"/>
</dbReference>
<dbReference type="Pfam" id="PF12796">
    <property type="entry name" value="Ank_2"/>
    <property type="match status" value="1"/>
</dbReference>
<dbReference type="Pfam" id="PF00642">
    <property type="entry name" value="zf-CCCH"/>
    <property type="match status" value="1"/>
</dbReference>
<dbReference type="Pfam" id="PF25512">
    <property type="entry name" value="zf-CCCH_AtC3H23"/>
    <property type="match status" value="1"/>
</dbReference>
<dbReference type="PRINTS" id="PR01415">
    <property type="entry name" value="ANKYRIN"/>
</dbReference>
<dbReference type="SMART" id="SM00248">
    <property type="entry name" value="ANK"/>
    <property type="match status" value="2"/>
</dbReference>
<dbReference type="SMART" id="SM00356">
    <property type="entry name" value="ZnF_C3H1"/>
    <property type="match status" value="2"/>
</dbReference>
<dbReference type="SUPFAM" id="SSF48403">
    <property type="entry name" value="Ankyrin repeat"/>
    <property type="match status" value="1"/>
</dbReference>
<dbReference type="PROSITE" id="PS50297">
    <property type="entry name" value="ANK_REP_REGION"/>
    <property type="match status" value="1"/>
</dbReference>
<dbReference type="PROSITE" id="PS50088">
    <property type="entry name" value="ANK_REPEAT"/>
    <property type="match status" value="1"/>
</dbReference>
<dbReference type="PROSITE" id="PS50103">
    <property type="entry name" value="ZF_C3H1"/>
    <property type="match status" value="2"/>
</dbReference>
<accession>P93755</accession>
<accession>Q94C18</accession>
<proteinExistence type="evidence at protein level"/>
<gene>
    <name type="ordered locus">At2g41900</name>
    <name type="ORF">T6D20.20</name>
</gene>
<sequence>MCCGSDRLNQIVSSRSSLPISFEEDNNLVTNTDMNHLTVETEDTFASLLELAANNDVEGVRLSIERDPSCVDEAGLWYGRQKGSKAMVNDYRTPLMVAATYGSIDVIKLIVSLTDADVNRACGNDQTTALHCAASGGAVNAIQVVKLLLAAGADLNLLDAEGQRAGDVIVVPPKLEGVKLMLQELLSADGSSTAERNLRVVTNVPNRSSSPCHSPTGENGGSGSGSPLGSPFKLKSTEFKKEYPVDPSLPDIKNSIYATDEFRMYSFKVRPCSRAYSHDWTECPFVHPGENARRRDPRKFHYSCVPCPDFRKGACRRGDMCEYAHGVFECWLHPAQYRTRLCKDGTGCARRVCFFAHTPEELRPLYASTGSAVPSPRSNADYAAALSLLPGSPSGVSVMSPLSPSAAGNGMSHSNMAWPQPNVPALHLPGSNLQSSRLRSSLNARDIPTDEFNMLADYEQQQLLNEYSNALSRSGRMKSMPPSNLEDLFSAEGSSSPRFTDSALASAVFSPTHKSAVFNQFQQQQQQQQSMLSPINTSFSSPKSVDHSLFSGGGRMSPRNVVEPISPMSARVSMLAQCVKQQQQQQQQQQQQHQFRSLSSRELRTNSSPIVGSPVNNNTWSSKWGSSNGQPDWGMSSEALGKLRSSSSFDGDEPDVSWVQSLVKETPAEAKEKAATSSSGEHVMKQPNPVEPVMDHAGLEAWIEQMQLDQLVAQQN</sequence>
<protein>
    <recommendedName>
        <fullName>Zinc finger CCCH domain-containing protein 30</fullName>
        <shortName>AtC3H30</shortName>
    </recommendedName>
</protein>
<evidence type="ECO:0000255" key="1">
    <source>
        <dbReference type="PROSITE-ProRule" id="PRU00723"/>
    </source>
</evidence>
<evidence type="ECO:0000256" key="2">
    <source>
        <dbReference type="SAM" id="MobiDB-lite"/>
    </source>
</evidence>
<evidence type="ECO:0007744" key="3">
    <source>
    </source>
</evidence>